<evidence type="ECO:0000255" key="1">
    <source>
        <dbReference type="HAMAP-Rule" id="MF_00286"/>
    </source>
</evidence>
<proteinExistence type="inferred from homology"/>
<gene>
    <name evidence="1" type="primary">dsbB2</name>
    <name type="ordered locus">Psyr_0058</name>
</gene>
<reference key="1">
    <citation type="journal article" date="2005" name="Proc. Natl. Acad. Sci. U.S.A.">
        <title>Comparison of the complete genome sequences of Pseudomonas syringae pv. syringae B728a and pv. tomato DC3000.</title>
        <authorList>
            <person name="Feil H."/>
            <person name="Feil W.S."/>
            <person name="Chain P."/>
            <person name="Larimer F."/>
            <person name="Dibartolo G."/>
            <person name="Copeland A."/>
            <person name="Lykidis A."/>
            <person name="Trong S."/>
            <person name="Nolan M."/>
            <person name="Goltsman E."/>
            <person name="Thiel J."/>
            <person name="Malfatti S."/>
            <person name="Loper J.E."/>
            <person name="Lapidus A."/>
            <person name="Detter J.C."/>
            <person name="Land M."/>
            <person name="Richardson P.M."/>
            <person name="Kyrpides N.C."/>
            <person name="Ivanova N."/>
            <person name="Lindow S.E."/>
        </authorList>
    </citation>
    <scope>NUCLEOTIDE SEQUENCE [LARGE SCALE GENOMIC DNA]</scope>
    <source>
        <strain>B728a</strain>
    </source>
</reference>
<comment type="function">
    <text evidence="1">Required for disulfide bond formation in some periplasmic proteins. Acts by oxidizing the DsbA protein.</text>
</comment>
<comment type="subcellular location">
    <subcellularLocation>
        <location evidence="1">Cell inner membrane</location>
        <topology evidence="1">Multi-pass membrane protein</topology>
    </subcellularLocation>
</comment>
<comment type="similarity">
    <text evidence="1">Belongs to the DsbB family.</text>
</comment>
<protein>
    <recommendedName>
        <fullName evidence="1">Disulfide bond formation protein B 2</fullName>
    </recommendedName>
    <alternativeName>
        <fullName evidence="1">Disulfide oxidoreductase 2</fullName>
    </alternativeName>
</protein>
<dbReference type="EMBL" id="CP000075">
    <property type="protein sequence ID" value="AAY35132.1"/>
    <property type="molecule type" value="Genomic_DNA"/>
</dbReference>
<dbReference type="RefSeq" id="WP_003401558.1">
    <property type="nucleotide sequence ID" value="NC_007005.1"/>
</dbReference>
<dbReference type="RefSeq" id="YP_233170.1">
    <property type="nucleotide sequence ID" value="NC_007005.1"/>
</dbReference>
<dbReference type="STRING" id="205918.Psyr_0058"/>
<dbReference type="KEGG" id="psb:Psyr_0058"/>
<dbReference type="PATRIC" id="fig|205918.7.peg.57"/>
<dbReference type="eggNOG" id="COG1495">
    <property type="taxonomic scope" value="Bacteria"/>
</dbReference>
<dbReference type="HOGENOM" id="CLU_098660_1_1_6"/>
<dbReference type="OrthoDB" id="3711263at2"/>
<dbReference type="Proteomes" id="UP000000426">
    <property type="component" value="Chromosome"/>
</dbReference>
<dbReference type="GO" id="GO:0005886">
    <property type="term" value="C:plasma membrane"/>
    <property type="evidence" value="ECO:0007669"/>
    <property type="project" value="UniProtKB-SubCell"/>
</dbReference>
<dbReference type="GO" id="GO:0009055">
    <property type="term" value="F:electron transfer activity"/>
    <property type="evidence" value="ECO:0007669"/>
    <property type="project" value="UniProtKB-UniRule"/>
</dbReference>
<dbReference type="GO" id="GO:0015035">
    <property type="term" value="F:protein-disulfide reductase activity"/>
    <property type="evidence" value="ECO:0007669"/>
    <property type="project" value="UniProtKB-UniRule"/>
</dbReference>
<dbReference type="GO" id="GO:0006457">
    <property type="term" value="P:protein folding"/>
    <property type="evidence" value="ECO:0007669"/>
    <property type="project" value="InterPro"/>
</dbReference>
<dbReference type="Gene3D" id="1.20.1550.10">
    <property type="entry name" value="DsbB-like"/>
    <property type="match status" value="1"/>
</dbReference>
<dbReference type="HAMAP" id="MF_00286">
    <property type="entry name" value="DsbB"/>
    <property type="match status" value="1"/>
</dbReference>
<dbReference type="InterPro" id="IPR003752">
    <property type="entry name" value="DiS_bond_form_DsbB/BdbC"/>
</dbReference>
<dbReference type="InterPro" id="IPR022920">
    <property type="entry name" value="Disulphide_bond_form_DsbB"/>
</dbReference>
<dbReference type="InterPro" id="IPR050183">
    <property type="entry name" value="DsbB"/>
</dbReference>
<dbReference type="InterPro" id="IPR023380">
    <property type="entry name" value="DsbB-like_sf"/>
</dbReference>
<dbReference type="PANTHER" id="PTHR36570">
    <property type="entry name" value="DISULFIDE BOND FORMATION PROTEIN B"/>
    <property type="match status" value="1"/>
</dbReference>
<dbReference type="PANTHER" id="PTHR36570:SF3">
    <property type="entry name" value="DISULFIDE BOND FORMATION PROTEIN B"/>
    <property type="match status" value="1"/>
</dbReference>
<dbReference type="Pfam" id="PF02600">
    <property type="entry name" value="DsbB"/>
    <property type="match status" value="1"/>
</dbReference>
<dbReference type="SUPFAM" id="SSF158442">
    <property type="entry name" value="DsbB-like"/>
    <property type="match status" value="1"/>
</dbReference>
<name>DSBB2_PSEU2</name>
<sequence>MYLARTRFLFFLASLACASIIGVAFYLQQAVGLDPCTLCMVQRAAFIACGVLALCAACHAPGPTGTRRYSLGLLLVALAGLAGAGTQVWLQTASADQLIPFITRLEQILSLLSLDMCIDRLRSDALFCAEITWTLFGISLPEWSLLAFTGLALLPLYPLFSELSHWLATRDRGGY</sequence>
<organism>
    <name type="scientific">Pseudomonas syringae pv. syringae (strain B728a)</name>
    <dbReference type="NCBI Taxonomy" id="205918"/>
    <lineage>
        <taxon>Bacteria</taxon>
        <taxon>Pseudomonadati</taxon>
        <taxon>Pseudomonadota</taxon>
        <taxon>Gammaproteobacteria</taxon>
        <taxon>Pseudomonadales</taxon>
        <taxon>Pseudomonadaceae</taxon>
        <taxon>Pseudomonas</taxon>
        <taxon>Pseudomonas syringae</taxon>
    </lineage>
</organism>
<feature type="chain" id="PRO_0000298395" description="Disulfide bond formation protein B 2">
    <location>
        <begin position="1"/>
        <end position="175"/>
    </location>
</feature>
<feature type="topological domain" description="Cytoplasmic" evidence="1">
    <location>
        <begin position="1"/>
        <end position="9"/>
    </location>
</feature>
<feature type="transmembrane region" description="Helical" evidence="1">
    <location>
        <begin position="10"/>
        <end position="26"/>
    </location>
</feature>
<feature type="topological domain" description="Periplasmic" evidence="1">
    <location>
        <begin position="27"/>
        <end position="44"/>
    </location>
</feature>
<feature type="transmembrane region" description="Helical" evidence="1">
    <location>
        <begin position="45"/>
        <end position="61"/>
    </location>
</feature>
<feature type="topological domain" description="Cytoplasmic" evidence="1">
    <location>
        <begin position="62"/>
        <end position="68"/>
    </location>
</feature>
<feature type="transmembrane region" description="Helical" evidence="1">
    <location>
        <begin position="69"/>
        <end position="85"/>
    </location>
</feature>
<feature type="topological domain" description="Periplasmic" evidence="1">
    <location>
        <begin position="86"/>
        <end position="142"/>
    </location>
</feature>
<feature type="transmembrane region" description="Helical" evidence="1">
    <location>
        <begin position="143"/>
        <end position="161"/>
    </location>
</feature>
<feature type="topological domain" description="Cytoplasmic" evidence="1">
    <location>
        <begin position="162"/>
        <end position="175"/>
    </location>
</feature>
<feature type="disulfide bond" description="Redox-active" evidence="1">
    <location>
        <begin position="36"/>
        <end position="39"/>
    </location>
</feature>
<accession>Q500P0</accession>
<keyword id="KW-0997">Cell inner membrane</keyword>
<keyword id="KW-1003">Cell membrane</keyword>
<keyword id="KW-0143">Chaperone</keyword>
<keyword id="KW-1015">Disulfide bond</keyword>
<keyword id="KW-0249">Electron transport</keyword>
<keyword id="KW-0472">Membrane</keyword>
<keyword id="KW-0560">Oxidoreductase</keyword>
<keyword id="KW-0676">Redox-active center</keyword>
<keyword id="KW-0812">Transmembrane</keyword>
<keyword id="KW-1133">Transmembrane helix</keyword>
<keyword id="KW-0813">Transport</keyword>